<dbReference type="EC" id="2.7.8.13" evidence="1"/>
<dbReference type="EMBL" id="CP001096">
    <property type="protein sequence ID" value="ACF02547.1"/>
    <property type="molecule type" value="Genomic_DNA"/>
</dbReference>
<dbReference type="RefSeq" id="WP_012496968.1">
    <property type="nucleotide sequence ID" value="NC_011004.1"/>
</dbReference>
<dbReference type="SMR" id="B3QFN4"/>
<dbReference type="KEGG" id="rpt:Rpal_4051"/>
<dbReference type="HOGENOM" id="CLU_023982_0_0_5"/>
<dbReference type="OrthoDB" id="9805475at2"/>
<dbReference type="UniPathway" id="UPA00219"/>
<dbReference type="Proteomes" id="UP000001725">
    <property type="component" value="Chromosome"/>
</dbReference>
<dbReference type="GO" id="GO:0005886">
    <property type="term" value="C:plasma membrane"/>
    <property type="evidence" value="ECO:0007669"/>
    <property type="project" value="UniProtKB-SubCell"/>
</dbReference>
<dbReference type="GO" id="GO:0046872">
    <property type="term" value="F:metal ion binding"/>
    <property type="evidence" value="ECO:0007669"/>
    <property type="project" value="UniProtKB-KW"/>
</dbReference>
<dbReference type="GO" id="GO:0008963">
    <property type="term" value="F:phospho-N-acetylmuramoyl-pentapeptide-transferase activity"/>
    <property type="evidence" value="ECO:0007669"/>
    <property type="project" value="UniProtKB-UniRule"/>
</dbReference>
<dbReference type="GO" id="GO:0051992">
    <property type="term" value="F:UDP-N-acetylmuramoyl-L-alanyl-D-glutamyl-meso-2,6-diaminopimelyl-D-alanyl-D-alanine:undecaprenyl-phosphate transferase activity"/>
    <property type="evidence" value="ECO:0007669"/>
    <property type="project" value="RHEA"/>
</dbReference>
<dbReference type="GO" id="GO:0051301">
    <property type="term" value="P:cell division"/>
    <property type="evidence" value="ECO:0007669"/>
    <property type="project" value="UniProtKB-KW"/>
</dbReference>
<dbReference type="GO" id="GO:0071555">
    <property type="term" value="P:cell wall organization"/>
    <property type="evidence" value="ECO:0007669"/>
    <property type="project" value="UniProtKB-KW"/>
</dbReference>
<dbReference type="GO" id="GO:0009252">
    <property type="term" value="P:peptidoglycan biosynthetic process"/>
    <property type="evidence" value="ECO:0007669"/>
    <property type="project" value="UniProtKB-UniRule"/>
</dbReference>
<dbReference type="GO" id="GO:0008360">
    <property type="term" value="P:regulation of cell shape"/>
    <property type="evidence" value="ECO:0007669"/>
    <property type="project" value="UniProtKB-KW"/>
</dbReference>
<dbReference type="CDD" id="cd06852">
    <property type="entry name" value="GT_MraY"/>
    <property type="match status" value="1"/>
</dbReference>
<dbReference type="HAMAP" id="MF_00038">
    <property type="entry name" value="MraY"/>
    <property type="match status" value="1"/>
</dbReference>
<dbReference type="InterPro" id="IPR000715">
    <property type="entry name" value="Glycosyl_transferase_4"/>
</dbReference>
<dbReference type="InterPro" id="IPR003524">
    <property type="entry name" value="PNAcMuramoyl-5peptid_Trfase"/>
</dbReference>
<dbReference type="InterPro" id="IPR018480">
    <property type="entry name" value="PNAcMuramoyl-5peptid_Trfase_CS"/>
</dbReference>
<dbReference type="NCBIfam" id="TIGR00445">
    <property type="entry name" value="mraY"/>
    <property type="match status" value="1"/>
</dbReference>
<dbReference type="PANTHER" id="PTHR22926">
    <property type="entry name" value="PHOSPHO-N-ACETYLMURAMOYL-PENTAPEPTIDE-TRANSFERASE"/>
    <property type="match status" value="1"/>
</dbReference>
<dbReference type="PANTHER" id="PTHR22926:SF5">
    <property type="entry name" value="PHOSPHO-N-ACETYLMURAMOYL-PENTAPEPTIDE-TRANSFERASE HOMOLOG"/>
    <property type="match status" value="1"/>
</dbReference>
<dbReference type="Pfam" id="PF00953">
    <property type="entry name" value="Glycos_transf_4"/>
    <property type="match status" value="1"/>
</dbReference>
<dbReference type="Pfam" id="PF10555">
    <property type="entry name" value="MraY_sig1"/>
    <property type="match status" value="1"/>
</dbReference>
<dbReference type="PROSITE" id="PS01347">
    <property type="entry name" value="MRAY_1"/>
    <property type="match status" value="1"/>
</dbReference>
<dbReference type="PROSITE" id="PS01348">
    <property type="entry name" value="MRAY_2"/>
    <property type="match status" value="1"/>
</dbReference>
<comment type="function">
    <text evidence="1">Catalyzes the initial step of the lipid cycle reactions in the biosynthesis of the cell wall peptidoglycan: transfers peptidoglycan precursor phospho-MurNAc-pentapeptide from UDP-MurNAc-pentapeptide onto the lipid carrier undecaprenyl phosphate, yielding undecaprenyl-pyrophosphoryl-MurNAc-pentapeptide, known as lipid I.</text>
</comment>
<comment type="catalytic activity">
    <reaction evidence="1">
        <text>UDP-N-acetyl-alpha-D-muramoyl-L-alanyl-gamma-D-glutamyl-meso-2,6-diaminopimeloyl-D-alanyl-D-alanine + di-trans,octa-cis-undecaprenyl phosphate = di-trans,octa-cis-undecaprenyl diphospho-N-acetyl-alpha-D-muramoyl-L-alanyl-D-glutamyl-meso-2,6-diaminopimeloyl-D-alanyl-D-alanine + UMP</text>
        <dbReference type="Rhea" id="RHEA:28386"/>
        <dbReference type="ChEBI" id="CHEBI:57865"/>
        <dbReference type="ChEBI" id="CHEBI:60392"/>
        <dbReference type="ChEBI" id="CHEBI:61386"/>
        <dbReference type="ChEBI" id="CHEBI:61387"/>
        <dbReference type="EC" id="2.7.8.13"/>
    </reaction>
</comment>
<comment type="cofactor">
    <cofactor evidence="1">
        <name>Mg(2+)</name>
        <dbReference type="ChEBI" id="CHEBI:18420"/>
    </cofactor>
</comment>
<comment type="pathway">
    <text evidence="1">Cell wall biogenesis; peptidoglycan biosynthesis.</text>
</comment>
<comment type="subcellular location">
    <subcellularLocation>
        <location evidence="1">Cell inner membrane</location>
        <topology evidence="1">Multi-pass membrane protein</topology>
    </subcellularLocation>
</comment>
<comment type="similarity">
    <text evidence="1">Belongs to the glycosyltransferase 4 family. MraY subfamily.</text>
</comment>
<reference key="1">
    <citation type="submission" date="2008-05" db="EMBL/GenBank/DDBJ databases">
        <title>Complete sequence of Rhodopseudomonas palustris TIE-1.</title>
        <authorList>
            <consortium name="US DOE Joint Genome Institute"/>
            <person name="Lucas S."/>
            <person name="Copeland A."/>
            <person name="Lapidus A."/>
            <person name="Glavina del Rio T."/>
            <person name="Dalin E."/>
            <person name="Tice H."/>
            <person name="Pitluck S."/>
            <person name="Chain P."/>
            <person name="Malfatti S."/>
            <person name="Shin M."/>
            <person name="Vergez L."/>
            <person name="Lang D."/>
            <person name="Schmutz J."/>
            <person name="Larimer F."/>
            <person name="Land M."/>
            <person name="Hauser L."/>
            <person name="Kyrpides N."/>
            <person name="Mikhailova N."/>
            <person name="Emerson D."/>
            <person name="Newman D.K."/>
            <person name="Roden E."/>
            <person name="Richardson P."/>
        </authorList>
    </citation>
    <scope>NUCLEOTIDE SEQUENCE [LARGE SCALE GENOMIC DNA]</scope>
    <source>
        <strain>TIE-1</strain>
    </source>
</reference>
<sequence>MLYWLIDLSSSFPAFNVFRYITFRTGGAMVTGALFVFMFGPWIIDNLRLRQGKGQPIRTDGPQSHLMTKKGTPTMGGLMILSGLTVGTVLWANPLNPYVWIVLAVTLGFGFVGFYDDYMKVTKQTHAGISGRTRLLIEFIIAGAACFALVWLGRAPLSSSLVIPFFKEVMLNLGWAFVVFGAFVVVGAGNAVNLTDGLDGLAIVPVMIAAASFGLISYLAGNAVFAEYLQINYVAGTGELAVLCGALLGAGLGFLWFNAPPASIFMGDTGSLALGGMLGSIAVAVKHEIVLAVIGGLFVLEAVSVIVQVASFKLTGKRVFKMAPIHHHFEQKGWTEPQIVIRFWIIAVMLALAGLSTLKLR</sequence>
<feature type="chain" id="PRO_1000090663" description="Phospho-N-acetylmuramoyl-pentapeptide-transferase">
    <location>
        <begin position="1"/>
        <end position="361"/>
    </location>
</feature>
<feature type="transmembrane region" description="Helical" evidence="1">
    <location>
        <begin position="25"/>
        <end position="45"/>
    </location>
</feature>
<feature type="transmembrane region" description="Helical" evidence="1">
    <location>
        <begin position="72"/>
        <end position="92"/>
    </location>
</feature>
<feature type="transmembrane region" description="Helical" evidence="1">
    <location>
        <begin position="95"/>
        <end position="115"/>
    </location>
</feature>
<feature type="transmembrane region" description="Helical" evidence="1">
    <location>
        <begin position="135"/>
        <end position="155"/>
    </location>
</feature>
<feature type="transmembrane region" description="Helical" evidence="1">
    <location>
        <begin position="169"/>
        <end position="189"/>
    </location>
</feature>
<feature type="transmembrane region" description="Helical" evidence="1">
    <location>
        <begin position="200"/>
        <end position="220"/>
    </location>
</feature>
<feature type="transmembrane region" description="Helical" evidence="1">
    <location>
        <begin position="240"/>
        <end position="260"/>
    </location>
</feature>
<feature type="transmembrane region" description="Helical" evidence="1">
    <location>
        <begin position="264"/>
        <end position="284"/>
    </location>
</feature>
<feature type="transmembrane region" description="Helical" evidence="1">
    <location>
        <begin position="289"/>
        <end position="309"/>
    </location>
</feature>
<feature type="transmembrane region" description="Helical" evidence="1">
    <location>
        <begin position="338"/>
        <end position="358"/>
    </location>
</feature>
<organism>
    <name type="scientific">Rhodopseudomonas palustris (strain TIE-1)</name>
    <dbReference type="NCBI Taxonomy" id="395960"/>
    <lineage>
        <taxon>Bacteria</taxon>
        <taxon>Pseudomonadati</taxon>
        <taxon>Pseudomonadota</taxon>
        <taxon>Alphaproteobacteria</taxon>
        <taxon>Hyphomicrobiales</taxon>
        <taxon>Nitrobacteraceae</taxon>
        <taxon>Rhodopseudomonas</taxon>
    </lineage>
</organism>
<gene>
    <name evidence="1" type="primary">mraY</name>
    <name type="ordered locus">Rpal_4051</name>
</gene>
<proteinExistence type="inferred from homology"/>
<evidence type="ECO:0000255" key="1">
    <source>
        <dbReference type="HAMAP-Rule" id="MF_00038"/>
    </source>
</evidence>
<protein>
    <recommendedName>
        <fullName evidence="1">Phospho-N-acetylmuramoyl-pentapeptide-transferase</fullName>
        <ecNumber evidence="1">2.7.8.13</ecNumber>
    </recommendedName>
    <alternativeName>
        <fullName evidence="1">UDP-MurNAc-pentapeptide phosphotransferase</fullName>
    </alternativeName>
</protein>
<name>MRAY_RHOPT</name>
<keyword id="KW-0131">Cell cycle</keyword>
<keyword id="KW-0132">Cell division</keyword>
<keyword id="KW-0997">Cell inner membrane</keyword>
<keyword id="KW-1003">Cell membrane</keyword>
<keyword id="KW-0133">Cell shape</keyword>
<keyword id="KW-0961">Cell wall biogenesis/degradation</keyword>
<keyword id="KW-0460">Magnesium</keyword>
<keyword id="KW-0472">Membrane</keyword>
<keyword id="KW-0479">Metal-binding</keyword>
<keyword id="KW-0573">Peptidoglycan synthesis</keyword>
<keyword id="KW-0808">Transferase</keyword>
<keyword id="KW-0812">Transmembrane</keyword>
<keyword id="KW-1133">Transmembrane helix</keyword>
<accession>B3QFN4</accession>